<organism evidence="5">
    <name type="scientific">Canis lupus familiaris</name>
    <name type="common">Dog</name>
    <name type="synonym">Canis familiaris</name>
    <dbReference type="NCBI Taxonomy" id="9615"/>
    <lineage>
        <taxon>Eukaryota</taxon>
        <taxon>Metazoa</taxon>
        <taxon>Chordata</taxon>
        <taxon>Craniata</taxon>
        <taxon>Vertebrata</taxon>
        <taxon>Euteleostomi</taxon>
        <taxon>Mammalia</taxon>
        <taxon>Eutheria</taxon>
        <taxon>Laurasiatheria</taxon>
        <taxon>Carnivora</taxon>
        <taxon>Caniformia</taxon>
        <taxon>Canidae</taxon>
        <taxon>Canis</taxon>
    </lineage>
</organism>
<feature type="chain" id="PRO_0000147601" description="Fibroblast growth factor 8">
    <location>
        <begin position="1" status="less than"/>
        <end position="82" status="greater than"/>
    </location>
</feature>
<feature type="glycosylation site" description="N-linked (GlcNAc...) asparagine" evidence="3">
    <location>
        <position position="68"/>
    </location>
</feature>
<feature type="non-terminal residue" evidence="5">
    <location>
        <position position="1"/>
    </location>
</feature>
<feature type="non-terminal residue" evidence="5">
    <location>
        <position position="82"/>
    </location>
</feature>
<reference evidence="4" key="1">
    <citation type="journal article" date="1998" name="In Vitro Cell. Dev. Biol. Anim.">
        <title>Nucleotide sequence of canine fibroblast growth factor-8 (FGF-8).</title>
        <authorList>
            <person name="Canatan H."/>
            <person name="Lin Y.C."/>
        </authorList>
    </citation>
    <scope>NUCLEOTIDE SEQUENCE [MRNA]</scope>
    <source>
        <tissue>Prostate</tissue>
        <tissue>Testis</tissue>
    </source>
</reference>
<accession>O62682</accession>
<keyword id="KW-0217">Developmental protein</keyword>
<keyword id="KW-0221">Differentiation</keyword>
<keyword id="KW-0325">Glycoprotein</keyword>
<keyword id="KW-0339">Growth factor</keyword>
<keyword id="KW-0497">Mitogen</keyword>
<keyword id="KW-1185">Reference proteome</keyword>
<keyword id="KW-0964">Secreted</keyword>
<protein>
    <recommendedName>
        <fullName>Fibroblast growth factor 8</fullName>
        <shortName>FGF-8</shortName>
    </recommendedName>
    <alternativeName>
        <fullName>Androgen-induced growth factor</fullName>
        <shortName>AIGF</shortName>
    </alternativeName>
    <alternativeName>
        <fullName>Heparin-binding growth factor 8</fullName>
        <shortName>HBGF-8</shortName>
    </alternativeName>
</protein>
<sequence length="82" mass="9227">NKRINAMAEDGDPFAKLIVETDTFGSRVRVRGAETGLYICMNKKGKLIAKSNGKGKDCVFTEIELENNYTALQNAKYEGWYM</sequence>
<name>FGF8_CANLF</name>
<proteinExistence type="evidence at transcript level"/>
<dbReference type="EMBL" id="AF022487">
    <property type="protein sequence ID" value="AAC17218.1"/>
    <property type="molecule type" value="mRNA"/>
</dbReference>
<dbReference type="SMR" id="O62682"/>
<dbReference type="FunCoup" id="O62682">
    <property type="interactions" value="12"/>
</dbReference>
<dbReference type="STRING" id="9615.ENSCAFP00000014598"/>
<dbReference type="GlyCosmos" id="O62682">
    <property type="glycosylation" value="1 site, No reported glycans"/>
</dbReference>
<dbReference type="PaxDb" id="9612-ENSCAFP00000014598"/>
<dbReference type="eggNOG" id="KOG3885">
    <property type="taxonomic scope" value="Eukaryota"/>
</dbReference>
<dbReference type="InParanoid" id="O62682"/>
<dbReference type="OrthoDB" id="5988014at2759"/>
<dbReference type="Proteomes" id="UP000002254">
    <property type="component" value="Unplaced"/>
</dbReference>
<dbReference type="Proteomes" id="UP000694429">
    <property type="component" value="Unplaced"/>
</dbReference>
<dbReference type="Proteomes" id="UP000694542">
    <property type="component" value="Unplaced"/>
</dbReference>
<dbReference type="Proteomes" id="UP000805418">
    <property type="component" value="Unplaced"/>
</dbReference>
<dbReference type="GO" id="GO:0005737">
    <property type="term" value="C:cytoplasm"/>
    <property type="evidence" value="ECO:0000318"/>
    <property type="project" value="GO_Central"/>
</dbReference>
<dbReference type="GO" id="GO:0005615">
    <property type="term" value="C:extracellular space"/>
    <property type="evidence" value="ECO:0000318"/>
    <property type="project" value="GO_Central"/>
</dbReference>
<dbReference type="GO" id="GO:0008083">
    <property type="term" value="F:growth factor activity"/>
    <property type="evidence" value="ECO:0000318"/>
    <property type="project" value="GO_Central"/>
</dbReference>
<dbReference type="GO" id="GO:0005105">
    <property type="term" value="F:type 1 fibroblast growth factor receptor binding"/>
    <property type="evidence" value="ECO:0000318"/>
    <property type="project" value="GO_Central"/>
</dbReference>
<dbReference type="GO" id="GO:0005111">
    <property type="term" value="F:type 2 fibroblast growth factor receptor binding"/>
    <property type="evidence" value="ECO:0000318"/>
    <property type="project" value="GO_Central"/>
</dbReference>
<dbReference type="GO" id="GO:0009953">
    <property type="term" value="P:dorsal/ventral pattern formation"/>
    <property type="evidence" value="ECO:0000318"/>
    <property type="project" value="GO_Central"/>
</dbReference>
<dbReference type="GO" id="GO:0008543">
    <property type="term" value="P:fibroblast growth factor receptor signaling pathway"/>
    <property type="evidence" value="ECO:0000318"/>
    <property type="project" value="GO_Central"/>
</dbReference>
<dbReference type="GO" id="GO:0022008">
    <property type="term" value="P:neurogenesis"/>
    <property type="evidence" value="ECO:0000318"/>
    <property type="project" value="GO_Central"/>
</dbReference>
<dbReference type="GO" id="GO:0003148">
    <property type="term" value="P:outflow tract septum morphogenesis"/>
    <property type="evidence" value="ECO:0000250"/>
    <property type="project" value="UniProtKB"/>
</dbReference>
<dbReference type="GO" id="GO:0051781">
    <property type="term" value="P:positive regulation of cell division"/>
    <property type="evidence" value="ECO:0007669"/>
    <property type="project" value="UniProtKB-KW"/>
</dbReference>
<dbReference type="GO" id="GO:0008284">
    <property type="term" value="P:positive regulation of cell population proliferation"/>
    <property type="evidence" value="ECO:0000318"/>
    <property type="project" value="GO_Central"/>
</dbReference>
<dbReference type="GO" id="GO:0043410">
    <property type="term" value="P:positive regulation of MAPK cascade"/>
    <property type="evidence" value="ECO:0000318"/>
    <property type="project" value="GO_Central"/>
</dbReference>
<dbReference type="GO" id="GO:0030334">
    <property type="term" value="P:regulation of cell migration"/>
    <property type="evidence" value="ECO:0000318"/>
    <property type="project" value="GO_Central"/>
</dbReference>
<dbReference type="Gene3D" id="2.80.10.50">
    <property type="match status" value="1"/>
</dbReference>
<dbReference type="InterPro" id="IPR002209">
    <property type="entry name" value="Fibroblast_GF_fam"/>
</dbReference>
<dbReference type="InterPro" id="IPR008996">
    <property type="entry name" value="IL1/FGF"/>
</dbReference>
<dbReference type="PANTHER" id="PTHR11486">
    <property type="entry name" value="FIBROBLAST GROWTH FACTOR"/>
    <property type="match status" value="1"/>
</dbReference>
<dbReference type="Pfam" id="PF00167">
    <property type="entry name" value="FGF"/>
    <property type="match status" value="1"/>
</dbReference>
<dbReference type="PRINTS" id="PR00262">
    <property type="entry name" value="IL1HBGF"/>
</dbReference>
<dbReference type="SMART" id="SM00442">
    <property type="entry name" value="FGF"/>
    <property type="match status" value="1"/>
</dbReference>
<dbReference type="SUPFAM" id="SSF50353">
    <property type="entry name" value="Cytokine"/>
    <property type="match status" value="1"/>
</dbReference>
<dbReference type="PROSITE" id="PS00247">
    <property type="entry name" value="HBGF_FGF"/>
    <property type="match status" value="1"/>
</dbReference>
<comment type="function">
    <text evidence="2">Plays an important role in the regulation of embryonic development, cell proliferation, cell differentiation and cell migration. Required for normal brain, eye, ear and limb development during embryogenesis. Required for normal development of the gonadotropin-releasing hormone (GnRH) neuronal system. Plays a role in neurite outgrowth in hippocampal cells (By similarity).</text>
</comment>
<comment type="subunit">
    <text evidence="1">Monomer. Homodimer. Interacts with FGFR1, FGFR2, FGFR3 and FGFR4. Affinity between fibroblast growth factors (FGFs) and their receptors is increased by heparan sulfate glycosaminoglycans that function as coreceptors (By similarity).</text>
</comment>
<comment type="subcellular location">
    <subcellularLocation>
        <location>Secreted</location>
    </subcellularLocation>
</comment>
<comment type="similarity">
    <text evidence="4">Belongs to the heparin-binding growth factors family.</text>
</comment>
<evidence type="ECO:0000250" key="1"/>
<evidence type="ECO:0000250" key="2">
    <source>
        <dbReference type="UniProtKB" id="P55075"/>
    </source>
</evidence>
<evidence type="ECO:0000255" key="3"/>
<evidence type="ECO:0000305" key="4"/>
<evidence type="ECO:0000312" key="5">
    <source>
        <dbReference type="EMBL" id="AAC17218.1"/>
    </source>
</evidence>
<gene>
    <name type="primary">FGF8</name>
</gene>